<proteinExistence type="inferred from homology"/>
<organism>
    <name type="scientific">Phocaeicola vulgatus (strain ATCC 8482 / DSM 1447 / JCM 5826 / CCUG 4940 / NBRC 14291 / NCTC 11154)</name>
    <name type="common">Bacteroides vulgatus</name>
    <dbReference type="NCBI Taxonomy" id="435590"/>
    <lineage>
        <taxon>Bacteria</taxon>
        <taxon>Pseudomonadati</taxon>
        <taxon>Bacteroidota</taxon>
        <taxon>Bacteroidia</taxon>
        <taxon>Bacteroidales</taxon>
        <taxon>Bacteroidaceae</taxon>
        <taxon>Phocaeicola</taxon>
    </lineage>
</organism>
<protein>
    <recommendedName>
        <fullName evidence="1">tRNA-2-methylthio-N(6)-dimethylallyladenosine synthase</fullName>
        <ecNumber evidence="1">2.8.4.3</ecNumber>
    </recommendedName>
    <alternativeName>
        <fullName evidence="1">(Dimethylallyl)adenosine tRNA methylthiotransferase MiaB</fullName>
    </alternativeName>
    <alternativeName>
        <fullName evidence="1">tRNA-i(6)A37 methylthiotransferase</fullName>
    </alternativeName>
</protein>
<accession>A6KZJ2</accession>
<sequence>MKETTGADFKSATDSENKKLFIETYGCQMNVADSEVIASIMQMAGYHVCETLDEADAVFMNTCSIRDNAEQKILNRLEFFHSMKKNKRRNLIVGVLGCMAERVKDDLIENHHVDLVVGPDAYLTLPDLVASVEAGEKAINVELSTTETYREVIPSRICGNHISGFVSIMRGCNNFCHYCIVPYTRGRERSRDVESILNEVRDLADKGYKEVTLLGQNVNSYRFEKEGEIITFPMLLRTVAEAVPDMRVRFTTSHPKDMSDETLQVIAETPNVCKHIHLPVQSGSSRILKLMNRKYTREWYLERVAAIRRIIPDCGLSTDIFSGYHSETEEDHQESLSLMRECAYDSAFMFKYSERPGTYASKHLPDDVPEEVKIRRLNEIIELQNRLSAESNARDVGKTFEVMVEGVSKRSREQLFGRTQQNKVVVFDRGNHRIGDFVHVRITEASSATLKGEEVF</sequence>
<name>MIAB_PHOV8</name>
<gene>
    <name evidence="1" type="primary">miaB</name>
    <name type="ordered locus">BVU_1165</name>
</gene>
<dbReference type="EC" id="2.8.4.3" evidence="1"/>
<dbReference type="EMBL" id="CP000139">
    <property type="protein sequence ID" value="ABR38856.1"/>
    <property type="molecule type" value="Genomic_DNA"/>
</dbReference>
<dbReference type="RefSeq" id="WP_005844029.1">
    <property type="nucleotide sequence ID" value="NZ_JANSWM010000115.1"/>
</dbReference>
<dbReference type="SMR" id="A6KZJ2"/>
<dbReference type="STRING" id="435590.BVU_1165"/>
<dbReference type="PaxDb" id="435590-BVU_1165"/>
<dbReference type="GeneID" id="5302131"/>
<dbReference type="KEGG" id="bvu:BVU_1165"/>
<dbReference type="eggNOG" id="COG0621">
    <property type="taxonomic scope" value="Bacteria"/>
</dbReference>
<dbReference type="HOGENOM" id="CLU_018697_2_0_10"/>
<dbReference type="BioCyc" id="BVUL435590:G1G59-1212-MONOMER"/>
<dbReference type="Proteomes" id="UP000002861">
    <property type="component" value="Chromosome"/>
</dbReference>
<dbReference type="GO" id="GO:0005829">
    <property type="term" value="C:cytosol"/>
    <property type="evidence" value="ECO:0007669"/>
    <property type="project" value="TreeGrafter"/>
</dbReference>
<dbReference type="GO" id="GO:0051539">
    <property type="term" value="F:4 iron, 4 sulfur cluster binding"/>
    <property type="evidence" value="ECO:0007669"/>
    <property type="project" value="UniProtKB-UniRule"/>
</dbReference>
<dbReference type="GO" id="GO:0046872">
    <property type="term" value="F:metal ion binding"/>
    <property type="evidence" value="ECO:0007669"/>
    <property type="project" value="UniProtKB-KW"/>
</dbReference>
<dbReference type="GO" id="GO:0035597">
    <property type="term" value="F:N6-isopentenyladenosine methylthiotransferase activity"/>
    <property type="evidence" value="ECO:0007669"/>
    <property type="project" value="TreeGrafter"/>
</dbReference>
<dbReference type="CDD" id="cd01335">
    <property type="entry name" value="Radical_SAM"/>
    <property type="match status" value="1"/>
</dbReference>
<dbReference type="FunFam" id="3.40.50.12160:FF:000003">
    <property type="entry name" value="CDK5 regulatory subunit-associated protein 1"/>
    <property type="match status" value="1"/>
</dbReference>
<dbReference type="FunFam" id="3.80.30.20:FF:000001">
    <property type="entry name" value="tRNA-2-methylthio-N(6)-dimethylallyladenosine synthase 2"/>
    <property type="match status" value="1"/>
</dbReference>
<dbReference type="Gene3D" id="3.40.50.12160">
    <property type="entry name" value="Methylthiotransferase, N-terminal domain"/>
    <property type="match status" value="1"/>
</dbReference>
<dbReference type="Gene3D" id="2.40.50.140">
    <property type="entry name" value="Nucleic acid-binding proteins"/>
    <property type="match status" value="1"/>
</dbReference>
<dbReference type="Gene3D" id="3.80.30.20">
    <property type="entry name" value="tm_1862 like domain"/>
    <property type="match status" value="1"/>
</dbReference>
<dbReference type="HAMAP" id="MF_01864">
    <property type="entry name" value="tRNA_metthiotr_MiaB"/>
    <property type="match status" value="1"/>
</dbReference>
<dbReference type="InterPro" id="IPR006638">
    <property type="entry name" value="Elp3/MiaA/NifB-like_rSAM"/>
</dbReference>
<dbReference type="InterPro" id="IPR005839">
    <property type="entry name" value="Methylthiotransferase"/>
</dbReference>
<dbReference type="InterPro" id="IPR013848">
    <property type="entry name" value="Methylthiotransferase_N"/>
</dbReference>
<dbReference type="InterPro" id="IPR038135">
    <property type="entry name" value="Methylthiotransferase_N_sf"/>
</dbReference>
<dbReference type="InterPro" id="IPR006463">
    <property type="entry name" value="MiaB_methiolase"/>
</dbReference>
<dbReference type="InterPro" id="IPR012340">
    <property type="entry name" value="NA-bd_OB-fold"/>
</dbReference>
<dbReference type="InterPro" id="IPR007197">
    <property type="entry name" value="rSAM"/>
</dbReference>
<dbReference type="InterPro" id="IPR023404">
    <property type="entry name" value="rSAM_horseshoe"/>
</dbReference>
<dbReference type="InterPro" id="IPR002792">
    <property type="entry name" value="TRAM_dom"/>
</dbReference>
<dbReference type="NCBIfam" id="TIGR01574">
    <property type="entry name" value="miaB-methiolase"/>
    <property type="match status" value="1"/>
</dbReference>
<dbReference type="NCBIfam" id="TIGR00089">
    <property type="entry name" value="MiaB/RimO family radical SAM methylthiotransferase"/>
    <property type="match status" value="1"/>
</dbReference>
<dbReference type="PANTHER" id="PTHR43020">
    <property type="entry name" value="CDK5 REGULATORY SUBUNIT-ASSOCIATED PROTEIN 1"/>
    <property type="match status" value="1"/>
</dbReference>
<dbReference type="PANTHER" id="PTHR43020:SF2">
    <property type="entry name" value="MITOCHONDRIAL TRNA METHYLTHIOTRANSFERASE CDK5RAP1"/>
    <property type="match status" value="1"/>
</dbReference>
<dbReference type="Pfam" id="PF04055">
    <property type="entry name" value="Radical_SAM"/>
    <property type="match status" value="1"/>
</dbReference>
<dbReference type="Pfam" id="PF01938">
    <property type="entry name" value="TRAM"/>
    <property type="match status" value="1"/>
</dbReference>
<dbReference type="Pfam" id="PF00919">
    <property type="entry name" value="UPF0004"/>
    <property type="match status" value="1"/>
</dbReference>
<dbReference type="SFLD" id="SFLDF00273">
    <property type="entry name" value="(dimethylallyl)adenosine_tRNA"/>
    <property type="match status" value="1"/>
</dbReference>
<dbReference type="SFLD" id="SFLDG01082">
    <property type="entry name" value="B12-binding_domain_containing"/>
    <property type="match status" value="1"/>
</dbReference>
<dbReference type="SFLD" id="SFLDF00413">
    <property type="entry name" value="CDK5RAP1"/>
    <property type="match status" value="1"/>
</dbReference>
<dbReference type="SFLD" id="SFLDG01061">
    <property type="entry name" value="methylthiotransferase"/>
    <property type="match status" value="1"/>
</dbReference>
<dbReference type="SMART" id="SM00729">
    <property type="entry name" value="Elp3"/>
    <property type="match status" value="1"/>
</dbReference>
<dbReference type="SUPFAM" id="SSF102114">
    <property type="entry name" value="Radical SAM enzymes"/>
    <property type="match status" value="1"/>
</dbReference>
<dbReference type="PROSITE" id="PS51449">
    <property type="entry name" value="MTTASE_N"/>
    <property type="match status" value="1"/>
</dbReference>
<dbReference type="PROSITE" id="PS51918">
    <property type="entry name" value="RADICAL_SAM"/>
    <property type="match status" value="1"/>
</dbReference>
<dbReference type="PROSITE" id="PS50926">
    <property type="entry name" value="TRAM"/>
    <property type="match status" value="1"/>
</dbReference>
<evidence type="ECO:0000255" key="1">
    <source>
        <dbReference type="HAMAP-Rule" id="MF_01864"/>
    </source>
</evidence>
<evidence type="ECO:0000255" key="2">
    <source>
        <dbReference type="PROSITE-ProRule" id="PRU01266"/>
    </source>
</evidence>
<comment type="function">
    <text evidence="1">Catalyzes the methylthiolation of N6-(dimethylallyl)adenosine (i(6)A), leading to the formation of 2-methylthio-N6-(dimethylallyl)adenosine (ms(2)i(6)A) at position 37 in tRNAs that read codons beginning with uridine.</text>
</comment>
<comment type="catalytic activity">
    <reaction evidence="1">
        <text>N(6)-dimethylallyladenosine(37) in tRNA + (sulfur carrier)-SH + AH2 + 2 S-adenosyl-L-methionine = 2-methylsulfanyl-N(6)-dimethylallyladenosine(37) in tRNA + (sulfur carrier)-H + 5'-deoxyadenosine + L-methionine + A + S-adenosyl-L-homocysteine + 2 H(+)</text>
        <dbReference type="Rhea" id="RHEA:37067"/>
        <dbReference type="Rhea" id="RHEA-COMP:10375"/>
        <dbReference type="Rhea" id="RHEA-COMP:10376"/>
        <dbReference type="Rhea" id="RHEA-COMP:14737"/>
        <dbReference type="Rhea" id="RHEA-COMP:14739"/>
        <dbReference type="ChEBI" id="CHEBI:13193"/>
        <dbReference type="ChEBI" id="CHEBI:15378"/>
        <dbReference type="ChEBI" id="CHEBI:17319"/>
        <dbReference type="ChEBI" id="CHEBI:17499"/>
        <dbReference type="ChEBI" id="CHEBI:29917"/>
        <dbReference type="ChEBI" id="CHEBI:57844"/>
        <dbReference type="ChEBI" id="CHEBI:57856"/>
        <dbReference type="ChEBI" id="CHEBI:59789"/>
        <dbReference type="ChEBI" id="CHEBI:64428"/>
        <dbReference type="ChEBI" id="CHEBI:74415"/>
        <dbReference type="ChEBI" id="CHEBI:74417"/>
        <dbReference type="EC" id="2.8.4.3"/>
    </reaction>
</comment>
<comment type="cofactor">
    <cofactor evidence="1">
        <name>[4Fe-4S] cluster</name>
        <dbReference type="ChEBI" id="CHEBI:49883"/>
    </cofactor>
    <text evidence="1">Binds 2 [4Fe-4S] clusters. One cluster is coordinated with 3 cysteines and an exchangeable S-adenosyl-L-methionine.</text>
</comment>
<comment type="subunit">
    <text evidence="1">Monomer.</text>
</comment>
<comment type="subcellular location">
    <subcellularLocation>
        <location evidence="1">Cytoplasm</location>
    </subcellularLocation>
</comment>
<comment type="similarity">
    <text evidence="1">Belongs to the methylthiotransferase family. MiaB subfamily.</text>
</comment>
<feature type="chain" id="PRO_0000374143" description="tRNA-2-methylthio-N(6)-dimethylallyladenosine synthase">
    <location>
        <begin position="1"/>
        <end position="456"/>
    </location>
</feature>
<feature type="domain" description="MTTase N-terminal" evidence="1">
    <location>
        <begin position="18"/>
        <end position="134"/>
    </location>
</feature>
<feature type="domain" description="Radical SAM core" evidence="2">
    <location>
        <begin position="158"/>
        <end position="390"/>
    </location>
</feature>
<feature type="domain" description="TRAM" evidence="1">
    <location>
        <begin position="393"/>
        <end position="456"/>
    </location>
</feature>
<feature type="binding site" evidence="1">
    <location>
        <position position="27"/>
    </location>
    <ligand>
        <name>[4Fe-4S] cluster</name>
        <dbReference type="ChEBI" id="CHEBI:49883"/>
        <label>1</label>
    </ligand>
</feature>
<feature type="binding site" evidence="1">
    <location>
        <position position="63"/>
    </location>
    <ligand>
        <name>[4Fe-4S] cluster</name>
        <dbReference type="ChEBI" id="CHEBI:49883"/>
        <label>1</label>
    </ligand>
</feature>
<feature type="binding site" evidence="1">
    <location>
        <position position="98"/>
    </location>
    <ligand>
        <name>[4Fe-4S] cluster</name>
        <dbReference type="ChEBI" id="CHEBI:49883"/>
        <label>1</label>
    </ligand>
</feature>
<feature type="binding site" evidence="1">
    <location>
        <position position="172"/>
    </location>
    <ligand>
        <name>[4Fe-4S] cluster</name>
        <dbReference type="ChEBI" id="CHEBI:49883"/>
        <label>2</label>
        <note>4Fe-4S-S-AdoMet</note>
    </ligand>
</feature>
<feature type="binding site" evidence="1">
    <location>
        <position position="176"/>
    </location>
    <ligand>
        <name>[4Fe-4S] cluster</name>
        <dbReference type="ChEBI" id="CHEBI:49883"/>
        <label>2</label>
        <note>4Fe-4S-S-AdoMet</note>
    </ligand>
</feature>
<feature type="binding site" evidence="1">
    <location>
        <position position="179"/>
    </location>
    <ligand>
        <name>[4Fe-4S] cluster</name>
        <dbReference type="ChEBI" id="CHEBI:49883"/>
        <label>2</label>
        <note>4Fe-4S-S-AdoMet</note>
    </ligand>
</feature>
<keyword id="KW-0004">4Fe-4S</keyword>
<keyword id="KW-0963">Cytoplasm</keyword>
<keyword id="KW-0408">Iron</keyword>
<keyword id="KW-0411">Iron-sulfur</keyword>
<keyword id="KW-0479">Metal-binding</keyword>
<keyword id="KW-0949">S-adenosyl-L-methionine</keyword>
<keyword id="KW-0808">Transferase</keyword>
<keyword id="KW-0819">tRNA processing</keyword>
<reference key="1">
    <citation type="journal article" date="2007" name="PLoS Biol.">
        <title>Evolution of symbiotic bacteria in the distal human intestine.</title>
        <authorList>
            <person name="Xu J."/>
            <person name="Mahowald M.A."/>
            <person name="Ley R.E."/>
            <person name="Lozupone C.A."/>
            <person name="Hamady M."/>
            <person name="Martens E.C."/>
            <person name="Henrissat B."/>
            <person name="Coutinho P.M."/>
            <person name="Minx P."/>
            <person name="Latreille P."/>
            <person name="Cordum H."/>
            <person name="Van Brunt A."/>
            <person name="Kim K."/>
            <person name="Fulton R.S."/>
            <person name="Fulton L.A."/>
            <person name="Clifton S.W."/>
            <person name="Wilson R.K."/>
            <person name="Knight R.D."/>
            <person name="Gordon J.I."/>
        </authorList>
    </citation>
    <scope>NUCLEOTIDE SEQUENCE [LARGE SCALE GENOMIC DNA]</scope>
    <source>
        <strain>ATCC 8482 / DSM 1447 / JCM 5826 / CCUG 4940 / NBRC 14291 / NCTC 11154</strain>
    </source>
</reference>